<sequence>MPELPEVETVRRGLEPVLSGARLSSVRANRPDLRFPLPDGFVQRLTGARILRLDRRAKYILAPLDRGDTLVMHLGMTGRFEIAAPEGTVRPGDFAREVTPDDKHAHVVFQTEDGATVTYFDPRRFGFMDLIPTDRVSHHAWFAAMGPEPLGEGFDARTLEKAFANRKQGPKTLLLDQRTVAGLGNIYVCEALHRSGISPFKPSGNIAKKRLTPLTAAIKDVLAEAVEVGGSTLKDFAAADGALGYFQHRFRVYDREGEPCPTPACKGVIAREVQAGRSTFFCPVCQV</sequence>
<organism>
    <name type="scientific">Caulobacter vibrioides (strain ATCC 19089 / CIP 103742 / CB 15)</name>
    <name type="common">Caulobacter crescentus</name>
    <dbReference type="NCBI Taxonomy" id="190650"/>
    <lineage>
        <taxon>Bacteria</taxon>
        <taxon>Pseudomonadati</taxon>
        <taxon>Pseudomonadota</taxon>
        <taxon>Alphaproteobacteria</taxon>
        <taxon>Caulobacterales</taxon>
        <taxon>Caulobacteraceae</taxon>
        <taxon>Caulobacter</taxon>
    </lineage>
</organism>
<gene>
    <name evidence="2" type="primary">mutM</name>
    <name evidence="2" type="synonym">fpg</name>
    <name type="ordered locus">CC_3707</name>
</gene>
<accession>Q9A259</accession>
<protein>
    <recommendedName>
        <fullName evidence="2">Formamidopyrimidine-DNA glycosylase</fullName>
        <shortName evidence="2">Fapy-DNA glycosylase</shortName>
        <ecNumber evidence="2">3.2.2.23</ecNumber>
    </recommendedName>
    <alternativeName>
        <fullName evidence="2">DNA-(apurinic or apyrimidinic site) lyase MutM</fullName>
        <shortName evidence="2">AP lyase MutM</shortName>
        <ecNumber evidence="2">4.2.99.18</ecNumber>
    </alternativeName>
</protein>
<feature type="initiator methionine" description="Removed" evidence="1">
    <location>
        <position position="1"/>
    </location>
</feature>
<feature type="chain" id="PRO_0000170817" description="Formamidopyrimidine-DNA glycosylase">
    <location>
        <begin position="2"/>
        <end position="287"/>
    </location>
</feature>
<feature type="zinc finger region" description="FPG-type" evidence="2">
    <location>
        <begin position="251"/>
        <end position="287"/>
    </location>
</feature>
<feature type="active site" description="Schiff-base intermediate with DNA" evidence="2">
    <location>
        <position position="2"/>
    </location>
</feature>
<feature type="active site" description="Proton donor" evidence="2">
    <location>
        <position position="3"/>
    </location>
</feature>
<feature type="active site" description="Proton donor; for beta-elimination activity" evidence="2">
    <location>
        <position position="58"/>
    </location>
</feature>
<feature type="active site" description="Proton donor; for delta-elimination activity" evidence="2">
    <location>
        <position position="277"/>
    </location>
</feature>
<feature type="binding site" evidence="2">
    <location>
        <position position="104"/>
    </location>
    <ligand>
        <name>DNA</name>
        <dbReference type="ChEBI" id="CHEBI:16991"/>
    </ligand>
</feature>
<feature type="binding site" evidence="2">
    <location>
        <position position="123"/>
    </location>
    <ligand>
        <name>DNA</name>
        <dbReference type="ChEBI" id="CHEBI:16991"/>
    </ligand>
</feature>
<feature type="binding site" evidence="2">
    <location>
        <position position="166"/>
    </location>
    <ligand>
        <name>DNA</name>
        <dbReference type="ChEBI" id="CHEBI:16991"/>
    </ligand>
</feature>
<dbReference type="EC" id="3.2.2.23" evidence="2"/>
<dbReference type="EC" id="4.2.99.18" evidence="2"/>
<dbReference type="EMBL" id="AE005673">
    <property type="protein sequence ID" value="AAK25669.1"/>
    <property type="status" value="ALT_INIT"/>
    <property type="molecule type" value="Genomic_DNA"/>
</dbReference>
<dbReference type="PIR" id="A87709">
    <property type="entry name" value="A87709"/>
</dbReference>
<dbReference type="RefSeq" id="NP_422501.1">
    <property type="nucleotide sequence ID" value="NC_002696.2"/>
</dbReference>
<dbReference type="RefSeq" id="WP_015923346.1">
    <property type="nucleotide sequence ID" value="NC_002696.2"/>
</dbReference>
<dbReference type="SMR" id="Q9A259"/>
<dbReference type="STRING" id="190650.CC_3707"/>
<dbReference type="EnsemblBacteria" id="AAK25669">
    <property type="protein sequence ID" value="AAK25669"/>
    <property type="gene ID" value="CC_3707"/>
</dbReference>
<dbReference type="KEGG" id="ccr:CC_3707"/>
<dbReference type="PATRIC" id="fig|190650.5.peg.3708"/>
<dbReference type="eggNOG" id="COG0266">
    <property type="taxonomic scope" value="Bacteria"/>
</dbReference>
<dbReference type="HOGENOM" id="CLU_038423_1_1_5"/>
<dbReference type="Proteomes" id="UP000001816">
    <property type="component" value="Chromosome"/>
</dbReference>
<dbReference type="GO" id="GO:0034039">
    <property type="term" value="F:8-oxo-7,8-dihydroguanine DNA N-glycosylase activity"/>
    <property type="evidence" value="ECO:0007669"/>
    <property type="project" value="TreeGrafter"/>
</dbReference>
<dbReference type="GO" id="GO:0140078">
    <property type="term" value="F:class I DNA-(apurinic or apyrimidinic site) endonuclease activity"/>
    <property type="evidence" value="ECO:0007669"/>
    <property type="project" value="UniProtKB-EC"/>
</dbReference>
<dbReference type="GO" id="GO:0003684">
    <property type="term" value="F:damaged DNA binding"/>
    <property type="evidence" value="ECO:0007669"/>
    <property type="project" value="InterPro"/>
</dbReference>
<dbReference type="GO" id="GO:0008270">
    <property type="term" value="F:zinc ion binding"/>
    <property type="evidence" value="ECO:0007669"/>
    <property type="project" value="UniProtKB-UniRule"/>
</dbReference>
<dbReference type="GO" id="GO:0006284">
    <property type="term" value="P:base-excision repair"/>
    <property type="evidence" value="ECO:0007669"/>
    <property type="project" value="InterPro"/>
</dbReference>
<dbReference type="CDD" id="cd20335">
    <property type="entry name" value="BRcat_RBR"/>
    <property type="match status" value="1"/>
</dbReference>
<dbReference type="CDD" id="cd08966">
    <property type="entry name" value="EcFpg-like_N"/>
    <property type="match status" value="1"/>
</dbReference>
<dbReference type="FunFam" id="1.10.8.50:FF:000003">
    <property type="entry name" value="Formamidopyrimidine-DNA glycosylase"/>
    <property type="match status" value="1"/>
</dbReference>
<dbReference type="Gene3D" id="1.10.8.50">
    <property type="match status" value="1"/>
</dbReference>
<dbReference type="Gene3D" id="3.20.190.10">
    <property type="entry name" value="MutM-like, N-terminal"/>
    <property type="match status" value="1"/>
</dbReference>
<dbReference type="HAMAP" id="MF_00103">
    <property type="entry name" value="Fapy_DNA_glycosyl"/>
    <property type="match status" value="1"/>
</dbReference>
<dbReference type="InterPro" id="IPR015886">
    <property type="entry name" value="DNA_glyclase/AP_lyase_DNA-bd"/>
</dbReference>
<dbReference type="InterPro" id="IPR015887">
    <property type="entry name" value="DNA_glyclase_Znf_dom_DNA_BS"/>
</dbReference>
<dbReference type="InterPro" id="IPR020629">
    <property type="entry name" value="Formamido-pyr_DNA_Glyclase"/>
</dbReference>
<dbReference type="InterPro" id="IPR012319">
    <property type="entry name" value="FPG_cat"/>
</dbReference>
<dbReference type="InterPro" id="IPR035937">
    <property type="entry name" value="MutM-like_N-ter"/>
</dbReference>
<dbReference type="InterPro" id="IPR010979">
    <property type="entry name" value="Ribosomal_uS13-like_H2TH"/>
</dbReference>
<dbReference type="InterPro" id="IPR000214">
    <property type="entry name" value="Znf_DNA_glyclase/AP_lyase"/>
</dbReference>
<dbReference type="InterPro" id="IPR010663">
    <property type="entry name" value="Znf_FPG/IleRS"/>
</dbReference>
<dbReference type="NCBIfam" id="TIGR00577">
    <property type="entry name" value="fpg"/>
    <property type="match status" value="1"/>
</dbReference>
<dbReference type="NCBIfam" id="NF002211">
    <property type="entry name" value="PRK01103.1"/>
    <property type="match status" value="1"/>
</dbReference>
<dbReference type="PANTHER" id="PTHR22993">
    <property type="entry name" value="FORMAMIDOPYRIMIDINE-DNA GLYCOSYLASE"/>
    <property type="match status" value="1"/>
</dbReference>
<dbReference type="PANTHER" id="PTHR22993:SF9">
    <property type="entry name" value="FORMAMIDOPYRIMIDINE-DNA GLYCOSYLASE"/>
    <property type="match status" value="1"/>
</dbReference>
<dbReference type="Pfam" id="PF01149">
    <property type="entry name" value="Fapy_DNA_glyco"/>
    <property type="match status" value="1"/>
</dbReference>
<dbReference type="Pfam" id="PF06831">
    <property type="entry name" value="H2TH"/>
    <property type="match status" value="1"/>
</dbReference>
<dbReference type="Pfam" id="PF06827">
    <property type="entry name" value="zf-FPG_IleRS"/>
    <property type="match status" value="1"/>
</dbReference>
<dbReference type="SMART" id="SM00898">
    <property type="entry name" value="Fapy_DNA_glyco"/>
    <property type="match status" value="1"/>
</dbReference>
<dbReference type="SMART" id="SM01232">
    <property type="entry name" value="H2TH"/>
    <property type="match status" value="1"/>
</dbReference>
<dbReference type="SUPFAM" id="SSF57716">
    <property type="entry name" value="Glucocorticoid receptor-like (DNA-binding domain)"/>
    <property type="match status" value="1"/>
</dbReference>
<dbReference type="SUPFAM" id="SSF81624">
    <property type="entry name" value="N-terminal domain of MutM-like DNA repair proteins"/>
    <property type="match status" value="1"/>
</dbReference>
<dbReference type="SUPFAM" id="SSF46946">
    <property type="entry name" value="S13-like H2TH domain"/>
    <property type="match status" value="1"/>
</dbReference>
<dbReference type="PROSITE" id="PS51068">
    <property type="entry name" value="FPG_CAT"/>
    <property type="match status" value="1"/>
</dbReference>
<dbReference type="PROSITE" id="PS01242">
    <property type="entry name" value="ZF_FPG_1"/>
    <property type="match status" value="1"/>
</dbReference>
<dbReference type="PROSITE" id="PS51066">
    <property type="entry name" value="ZF_FPG_2"/>
    <property type="match status" value="1"/>
</dbReference>
<reference key="1">
    <citation type="journal article" date="2001" name="Proc. Natl. Acad. Sci. U.S.A.">
        <title>Complete genome sequence of Caulobacter crescentus.</title>
        <authorList>
            <person name="Nierman W.C."/>
            <person name="Feldblyum T.V."/>
            <person name="Laub M.T."/>
            <person name="Paulsen I.T."/>
            <person name="Nelson K.E."/>
            <person name="Eisen J.A."/>
            <person name="Heidelberg J.F."/>
            <person name="Alley M.R.K."/>
            <person name="Ohta N."/>
            <person name="Maddock J.R."/>
            <person name="Potocka I."/>
            <person name="Nelson W.C."/>
            <person name="Newton A."/>
            <person name="Stephens C."/>
            <person name="Phadke N.D."/>
            <person name="Ely B."/>
            <person name="DeBoy R.T."/>
            <person name="Dodson R.J."/>
            <person name="Durkin A.S."/>
            <person name="Gwinn M.L."/>
            <person name="Haft D.H."/>
            <person name="Kolonay J.F."/>
            <person name="Smit J."/>
            <person name="Craven M.B."/>
            <person name="Khouri H.M."/>
            <person name="Shetty J."/>
            <person name="Berry K.J."/>
            <person name="Utterback T.R."/>
            <person name="Tran K."/>
            <person name="Wolf A.M."/>
            <person name="Vamathevan J.J."/>
            <person name="Ermolaeva M.D."/>
            <person name="White O."/>
            <person name="Salzberg S.L."/>
            <person name="Venter J.C."/>
            <person name="Shapiro L."/>
            <person name="Fraser C.M."/>
        </authorList>
    </citation>
    <scope>NUCLEOTIDE SEQUENCE [LARGE SCALE GENOMIC DNA]</scope>
    <source>
        <strain>ATCC 19089 / CIP 103742 / CB 15</strain>
    </source>
</reference>
<comment type="function">
    <text evidence="2">Involved in base excision repair of DNA damaged by oxidation or by mutagenic agents. Acts as a DNA glycosylase that recognizes and removes damaged bases. Has a preference for oxidized purines, such as 7,8-dihydro-8-oxoguanine (8-oxoG). Has AP (apurinic/apyrimidinic) lyase activity and introduces nicks in the DNA strand. Cleaves the DNA backbone by beta-delta elimination to generate a single-strand break at the site of the removed base with both 3'- and 5'-phosphates.</text>
</comment>
<comment type="catalytic activity">
    <reaction evidence="2">
        <text>Hydrolysis of DNA containing ring-opened 7-methylguanine residues, releasing 2,6-diamino-4-hydroxy-5-(N-methyl)formamidopyrimidine.</text>
        <dbReference type="EC" id="3.2.2.23"/>
    </reaction>
</comment>
<comment type="catalytic activity">
    <reaction evidence="2">
        <text>2'-deoxyribonucleotide-(2'-deoxyribose 5'-phosphate)-2'-deoxyribonucleotide-DNA = a 3'-end 2'-deoxyribonucleotide-(2,3-dehydro-2,3-deoxyribose 5'-phosphate)-DNA + a 5'-end 5'-phospho-2'-deoxyribonucleoside-DNA + H(+)</text>
        <dbReference type="Rhea" id="RHEA:66592"/>
        <dbReference type="Rhea" id="RHEA-COMP:13180"/>
        <dbReference type="Rhea" id="RHEA-COMP:16897"/>
        <dbReference type="Rhea" id="RHEA-COMP:17067"/>
        <dbReference type="ChEBI" id="CHEBI:15378"/>
        <dbReference type="ChEBI" id="CHEBI:136412"/>
        <dbReference type="ChEBI" id="CHEBI:157695"/>
        <dbReference type="ChEBI" id="CHEBI:167181"/>
        <dbReference type="EC" id="4.2.99.18"/>
    </reaction>
</comment>
<comment type="cofactor">
    <cofactor evidence="2">
        <name>Zn(2+)</name>
        <dbReference type="ChEBI" id="CHEBI:29105"/>
    </cofactor>
    <text evidence="2">Binds 1 zinc ion per subunit.</text>
</comment>
<comment type="subunit">
    <text evidence="2">Monomer.</text>
</comment>
<comment type="similarity">
    <text evidence="2">Belongs to the FPG family.</text>
</comment>
<comment type="sequence caution" evidence="3">
    <conflict type="erroneous initiation">
        <sequence resource="EMBL-CDS" id="AAK25669"/>
    </conflict>
</comment>
<name>FPG_CAUVC</name>
<proteinExistence type="inferred from homology"/>
<keyword id="KW-0227">DNA damage</keyword>
<keyword id="KW-0234">DNA repair</keyword>
<keyword id="KW-0238">DNA-binding</keyword>
<keyword id="KW-0326">Glycosidase</keyword>
<keyword id="KW-0378">Hydrolase</keyword>
<keyword id="KW-0456">Lyase</keyword>
<keyword id="KW-0479">Metal-binding</keyword>
<keyword id="KW-0511">Multifunctional enzyme</keyword>
<keyword id="KW-1185">Reference proteome</keyword>
<keyword id="KW-0862">Zinc</keyword>
<keyword id="KW-0863">Zinc-finger</keyword>
<evidence type="ECO:0000250" key="1"/>
<evidence type="ECO:0000255" key="2">
    <source>
        <dbReference type="HAMAP-Rule" id="MF_00103"/>
    </source>
</evidence>
<evidence type="ECO:0000305" key="3"/>